<evidence type="ECO:0000255" key="1">
    <source>
        <dbReference type="HAMAP-Rule" id="MF_00036"/>
    </source>
</evidence>
<gene>
    <name evidence="1" type="primary">alaS</name>
    <name type="ordered locus">SPCG_1372</name>
</gene>
<accession>B2IQK0</accession>
<keyword id="KW-0030">Aminoacyl-tRNA synthetase</keyword>
<keyword id="KW-0067">ATP-binding</keyword>
<keyword id="KW-0963">Cytoplasm</keyword>
<keyword id="KW-0436">Ligase</keyword>
<keyword id="KW-0479">Metal-binding</keyword>
<keyword id="KW-0547">Nucleotide-binding</keyword>
<keyword id="KW-0648">Protein biosynthesis</keyword>
<keyword id="KW-0694">RNA-binding</keyword>
<keyword id="KW-0820">tRNA-binding</keyword>
<keyword id="KW-0862">Zinc</keyword>
<comment type="function">
    <text evidence="1">Catalyzes the attachment of alanine to tRNA(Ala) in a two-step reaction: alanine is first activated by ATP to form Ala-AMP and then transferred to the acceptor end of tRNA(Ala). Also edits incorrectly charged Ser-tRNA(Ala) and Gly-tRNA(Ala) via its editing domain.</text>
</comment>
<comment type="catalytic activity">
    <reaction evidence="1">
        <text>tRNA(Ala) + L-alanine + ATP = L-alanyl-tRNA(Ala) + AMP + diphosphate</text>
        <dbReference type="Rhea" id="RHEA:12540"/>
        <dbReference type="Rhea" id="RHEA-COMP:9657"/>
        <dbReference type="Rhea" id="RHEA-COMP:9923"/>
        <dbReference type="ChEBI" id="CHEBI:30616"/>
        <dbReference type="ChEBI" id="CHEBI:33019"/>
        <dbReference type="ChEBI" id="CHEBI:57972"/>
        <dbReference type="ChEBI" id="CHEBI:78442"/>
        <dbReference type="ChEBI" id="CHEBI:78497"/>
        <dbReference type="ChEBI" id="CHEBI:456215"/>
        <dbReference type="EC" id="6.1.1.7"/>
    </reaction>
</comment>
<comment type="cofactor">
    <cofactor evidence="1">
        <name>Zn(2+)</name>
        <dbReference type="ChEBI" id="CHEBI:29105"/>
    </cofactor>
    <text evidence="1">Binds 1 zinc ion per subunit.</text>
</comment>
<comment type="subcellular location">
    <subcellularLocation>
        <location evidence="1">Cytoplasm</location>
    </subcellularLocation>
</comment>
<comment type="domain">
    <text evidence="1">Consists of three domains; the N-terminal catalytic domain, the editing domain and the C-terminal C-Ala domain. The editing domain removes incorrectly charged amino acids, while the C-Ala domain, along with tRNA(Ala), serves as a bridge to cooperatively bring together the editing and aminoacylation centers thus stimulating deacylation of misacylated tRNAs.</text>
</comment>
<comment type="similarity">
    <text evidence="1">Belongs to the class-II aminoacyl-tRNA synthetase family.</text>
</comment>
<sequence>MKQLSSAQVRQMWLDFWATKGHSVEPSVSLVPVNDPTLLWINSGVATLKKYFDGTIIPENPRITNAQKAIRTNDIENVGKTARHHTMFEMLGNFSIGDYFRDEAITWAYELLTSPEWFDFPAEKLYMTYYPDDKDSYNRWIEVGVDPSHLIPIEDNFWEIGAGPSGPDTEIFFDRGEAFDPENIGLRLLAEDIENDRYIEIWNIVLSQFNADPAVPRSEYKELPHKNIDTGAGLERLVAVIQGAKTNFETDLFMPIIREVEKLSGKVYDQDGDNMSFKVIADHIRSLSFAIGDGALPGNEGRGYVLRRLLRRASMHGQKLGINEPFLYKLVPTVGKIMESYYPEVLEKRDFIEKIVKSEEESFARTLHSGQHFAQGIVADLKEKGQSVIAGQDVFKLYDTYGFPVELTEEIAEEAGMTVDREGFEAAMKEQQERARASAVKGGSMGMQNETLQNITVESVFNYNTSQLSSKLVAIVADNAEVGAVSEGTASLIFAETSFYAEMGGQVADYGQILDESGKIVATVTNVQKAPNGQALHTVEVLAPLALNQEYTLAIDSNRRHRVMKNHTATHLLHAALHNILGNHATQAGSLNEVEFLRFDFTHFQAVTAEELRAIEQQVNEKIWEALEVKTVETDIDTAKEMGAMALFGEKYGKEVRVVTIGDYSIELCGGTHVGNTSEIGLFKIVKEEGIGSGTRRILAVTGKEAFEAYREQEDALKAIAATLKAPQVKEVPHKVEGLQEQLRQLQKENAELKEKAAAAAAGDIFKDVKEVNGHRYIASQVSVSDAGALRTFADNWKQKDYSDLLVLVAAIGDKVNVLVASKTKDLHAGNLVKELAPIIDGRGGGKPDMAMAGGSNQAKIQELLDAVAGKL</sequence>
<proteinExistence type="inferred from homology"/>
<name>SYA_STRPS</name>
<feature type="chain" id="PRO_0000347819" description="Alanine--tRNA ligase">
    <location>
        <begin position="1"/>
        <end position="872"/>
    </location>
</feature>
<feature type="binding site" evidence="1">
    <location>
        <position position="567"/>
    </location>
    <ligand>
        <name>Zn(2+)</name>
        <dbReference type="ChEBI" id="CHEBI:29105"/>
    </ligand>
</feature>
<feature type="binding site" evidence="1">
    <location>
        <position position="571"/>
    </location>
    <ligand>
        <name>Zn(2+)</name>
        <dbReference type="ChEBI" id="CHEBI:29105"/>
    </ligand>
</feature>
<feature type="binding site" evidence="1">
    <location>
        <position position="669"/>
    </location>
    <ligand>
        <name>Zn(2+)</name>
        <dbReference type="ChEBI" id="CHEBI:29105"/>
    </ligand>
</feature>
<feature type="binding site" evidence="1">
    <location>
        <position position="673"/>
    </location>
    <ligand>
        <name>Zn(2+)</name>
        <dbReference type="ChEBI" id="CHEBI:29105"/>
    </ligand>
</feature>
<dbReference type="EC" id="6.1.1.7" evidence="1"/>
<dbReference type="EMBL" id="CP001033">
    <property type="protein sequence ID" value="ACB90624.1"/>
    <property type="molecule type" value="Genomic_DNA"/>
</dbReference>
<dbReference type="RefSeq" id="WP_000811756.1">
    <property type="nucleotide sequence ID" value="NC_010582.1"/>
</dbReference>
<dbReference type="SMR" id="B2IQK0"/>
<dbReference type="KEGG" id="spw:SPCG_1372"/>
<dbReference type="HOGENOM" id="CLU_004485_1_1_9"/>
<dbReference type="GO" id="GO:0005829">
    <property type="term" value="C:cytosol"/>
    <property type="evidence" value="ECO:0007669"/>
    <property type="project" value="TreeGrafter"/>
</dbReference>
<dbReference type="GO" id="GO:0004813">
    <property type="term" value="F:alanine-tRNA ligase activity"/>
    <property type="evidence" value="ECO:0007669"/>
    <property type="project" value="UniProtKB-UniRule"/>
</dbReference>
<dbReference type="GO" id="GO:0002161">
    <property type="term" value="F:aminoacyl-tRNA deacylase activity"/>
    <property type="evidence" value="ECO:0007669"/>
    <property type="project" value="TreeGrafter"/>
</dbReference>
<dbReference type="GO" id="GO:0005524">
    <property type="term" value="F:ATP binding"/>
    <property type="evidence" value="ECO:0007669"/>
    <property type="project" value="UniProtKB-UniRule"/>
</dbReference>
<dbReference type="GO" id="GO:0140096">
    <property type="term" value="F:catalytic activity, acting on a protein"/>
    <property type="evidence" value="ECO:0007669"/>
    <property type="project" value="UniProtKB-ARBA"/>
</dbReference>
<dbReference type="GO" id="GO:0016740">
    <property type="term" value="F:transferase activity"/>
    <property type="evidence" value="ECO:0007669"/>
    <property type="project" value="UniProtKB-ARBA"/>
</dbReference>
<dbReference type="GO" id="GO:0000049">
    <property type="term" value="F:tRNA binding"/>
    <property type="evidence" value="ECO:0007669"/>
    <property type="project" value="UniProtKB-KW"/>
</dbReference>
<dbReference type="GO" id="GO:0008270">
    <property type="term" value="F:zinc ion binding"/>
    <property type="evidence" value="ECO:0007669"/>
    <property type="project" value="UniProtKB-UniRule"/>
</dbReference>
<dbReference type="GO" id="GO:0006419">
    <property type="term" value="P:alanyl-tRNA aminoacylation"/>
    <property type="evidence" value="ECO:0007669"/>
    <property type="project" value="UniProtKB-UniRule"/>
</dbReference>
<dbReference type="CDD" id="cd00673">
    <property type="entry name" value="AlaRS_core"/>
    <property type="match status" value="1"/>
</dbReference>
<dbReference type="FunFam" id="3.10.310.40:FF:000001">
    <property type="entry name" value="Alanine--tRNA ligase"/>
    <property type="match status" value="1"/>
</dbReference>
<dbReference type="FunFam" id="3.30.54.20:FF:000001">
    <property type="entry name" value="Alanine--tRNA ligase"/>
    <property type="match status" value="1"/>
</dbReference>
<dbReference type="FunFam" id="3.30.930.10:FF:000046">
    <property type="entry name" value="Alanine--tRNA ligase"/>
    <property type="match status" value="1"/>
</dbReference>
<dbReference type="FunFam" id="3.30.980.10:FF:000004">
    <property type="entry name" value="Alanine--tRNA ligase, cytoplasmic"/>
    <property type="match status" value="1"/>
</dbReference>
<dbReference type="Gene3D" id="2.40.30.130">
    <property type="match status" value="1"/>
</dbReference>
<dbReference type="Gene3D" id="3.10.310.40">
    <property type="match status" value="1"/>
</dbReference>
<dbReference type="Gene3D" id="3.30.54.20">
    <property type="match status" value="1"/>
</dbReference>
<dbReference type="Gene3D" id="6.10.250.550">
    <property type="match status" value="1"/>
</dbReference>
<dbReference type="Gene3D" id="3.30.930.10">
    <property type="entry name" value="Bira Bifunctional Protein, Domain 2"/>
    <property type="match status" value="1"/>
</dbReference>
<dbReference type="Gene3D" id="3.30.980.10">
    <property type="entry name" value="Threonyl-trna Synthetase, Chain A, domain 2"/>
    <property type="match status" value="1"/>
</dbReference>
<dbReference type="HAMAP" id="MF_00036_B">
    <property type="entry name" value="Ala_tRNA_synth_B"/>
    <property type="match status" value="1"/>
</dbReference>
<dbReference type="InterPro" id="IPR045864">
    <property type="entry name" value="aa-tRNA-synth_II/BPL/LPL"/>
</dbReference>
<dbReference type="InterPro" id="IPR002318">
    <property type="entry name" value="Ala-tRNA-lgiase_IIc"/>
</dbReference>
<dbReference type="InterPro" id="IPR018162">
    <property type="entry name" value="Ala-tRNA-ligase_IIc_anticod-bd"/>
</dbReference>
<dbReference type="InterPro" id="IPR018165">
    <property type="entry name" value="Ala-tRNA-synth_IIc_core"/>
</dbReference>
<dbReference type="InterPro" id="IPR018164">
    <property type="entry name" value="Ala-tRNA-synth_IIc_N"/>
</dbReference>
<dbReference type="InterPro" id="IPR050058">
    <property type="entry name" value="Ala-tRNA_ligase"/>
</dbReference>
<dbReference type="InterPro" id="IPR023033">
    <property type="entry name" value="Ala_tRNA_ligase_euk/bac"/>
</dbReference>
<dbReference type="InterPro" id="IPR003156">
    <property type="entry name" value="DHHA1_dom"/>
</dbReference>
<dbReference type="InterPro" id="IPR018163">
    <property type="entry name" value="Thr/Ala-tRNA-synth_IIc_edit"/>
</dbReference>
<dbReference type="InterPro" id="IPR009000">
    <property type="entry name" value="Transl_B-barrel_sf"/>
</dbReference>
<dbReference type="InterPro" id="IPR012947">
    <property type="entry name" value="tRNA_SAD"/>
</dbReference>
<dbReference type="NCBIfam" id="TIGR00344">
    <property type="entry name" value="alaS"/>
    <property type="match status" value="1"/>
</dbReference>
<dbReference type="PANTHER" id="PTHR11777:SF9">
    <property type="entry name" value="ALANINE--TRNA LIGASE, CYTOPLASMIC"/>
    <property type="match status" value="1"/>
</dbReference>
<dbReference type="PANTHER" id="PTHR11777">
    <property type="entry name" value="ALANYL-TRNA SYNTHETASE"/>
    <property type="match status" value="1"/>
</dbReference>
<dbReference type="Pfam" id="PF02272">
    <property type="entry name" value="DHHA1"/>
    <property type="match status" value="1"/>
</dbReference>
<dbReference type="Pfam" id="PF01411">
    <property type="entry name" value="tRNA-synt_2c"/>
    <property type="match status" value="1"/>
</dbReference>
<dbReference type="Pfam" id="PF07973">
    <property type="entry name" value="tRNA_SAD"/>
    <property type="match status" value="1"/>
</dbReference>
<dbReference type="PRINTS" id="PR00980">
    <property type="entry name" value="TRNASYNTHALA"/>
</dbReference>
<dbReference type="SMART" id="SM00863">
    <property type="entry name" value="tRNA_SAD"/>
    <property type="match status" value="1"/>
</dbReference>
<dbReference type="SUPFAM" id="SSF55681">
    <property type="entry name" value="Class II aaRS and biotin synthetases"/>
    <property type="match status" value="1"/>
</dbReference>
<dbReference type="SUPFAM" id="SSF101353">
    <property type="entry name" value="Putative anticodon-binding domain of alanyl-tRNA synthetase (AlaRS)"/>
    <property type="match status" value="1"/>
</dbReference>
<dbReference type="SUPFAM" id="SSF55186">
    <property type="entry name" value="ThrRS/AlaRS common domain"/>
    <property type="match status" value="1"/>
</dbReference>
<dbReference type="SUPFAM" id="SSF50447">
    <property type="entry name" value="Translation proteins"/>
    <property type="match status" value="1"/>
</dbReference>
<dbReference type="PROSITE" id="PS50860">
    <property type="entry name" value="AA_TRNA_LIGASE_II_ALA"/>
    <property type="match status" value="1"/>
</dbReference>
<protein>
    <recommendedName>
        <fullName evidence="1">Alanine--tRNA ligase</fullName>
        <ecNumber evidence="1">6.1.1.7</ecNumber>
    </recommendedName>
    <alternativeName>
        <fullName evidence="1">Alanyl-tRNA synthetase</fullName>
        <shortName evidence="1">AlaRS</shortName>
    </alternativeName>
</protein>
<organism>
    <name type="scientific">Streptococcus pneumoniae (strain CGSP14)</name>
    <dbReference type="NCBI Taxonomy" id="516950"/>
    <lineage>
        <taxon>Bacteria</taxon>
        <taxon>Bacillati</taxon>
        <taxon>Bacillota</taxon>
        <taxon>Bacilli</taxon>
        <taxon>Lactobacillales</taxon>
        <taxon>Streptococcaceae</taxon>
        <taxon>Streptococcus</taxon>
    </lineage>
</organism>
<reference key="1">
    <citation type="journal article" date="2009" name="BMC Genomics">
        <title>Genome evolution driven by host adaptations results in a more virulent and antimicrobial-resistant Streptococcus pneumoniae serotype 14.</title>
        <authorList>
            <person name="Ding F."/>
            <person name="Tang P."/>
            <person name="Hsu M.-H."/>
            <person name="Cui P."/>
            <person name="Hu S."/>
            <person name="Yu J."/>
            <person name="Chiu C.-H."/>
        </authorList>
    </citation>
    <scope>NUCLEOTIDE SEQUENCE [LARGE SCALE GENOMIC DNA]</scope>
    <source>
        <strain>CGSP14</strain>
    </source>
</reference>